<comment type="function">
    <text evidence="1">Assembles around the rod to form the L-ring and probably protects the motor/basal body from shearing forces during rotation.</text>
</comment>
<comment type="subunit">
    <text evidence="1">The basal body constitutes a major portion of the flagellar organelle and consists of four rings (L,P,S, and M) mounted on a central rod.</text>
</comment>
<comment type="subcellular location">
    <subcellularLocation>
        <location evidence="1">Cell outer membrane</location>
        <topology evidence="1">Lipid-anchor</topology>
    </subcellularLocation>
    <subcellularLocation>
        <location evidence="1">Bacterial flagellum basal body</location>
    </subcellularLocation>
</comment>
<comment type="similarity">
    <text evidence="1">Belongs to the FlgH family.</text>
</comment>
<name>FLGH_PSEPG</name>
<gene>
    <name evidence="1" type="primary">flgH</name>
    <name type="ordered locus">PputGB1_3945</name>
</gene>
<dbReference type="EMBL" id="CP000926">
    <property type="protein sequence ID" value="ABY99835.1"/>
    <property type="molecule type" value="Genomic_DNA"/>
</dbReference>
<dbReference type="RefSeq" id="WP_012273524.1">
    <property type="nucleotide sequence ID" value="NC_010322.1"/>
</dbReference>
<dbReference type="SMR" id="B0KR09"/>
<dbReference type="KEGG" id="ppg:PputGB1_3945"/>
<dbReference type="eggNOG" id="COG2063">
    <property type="taxonomic scope" value="Bacteria"/>
</dbReference>
<dbReference type="HOGENOM" id="CLU_069313_0_2_6"/>
<dbReference type="Proteomes" id="UP000002157">
    <property type="component" value="Chromosome"/>
</dbReference>
<dbReference type="GO" id="GO:0009427">
    <property type="term" value="C:bacterial-type flagellum basal body, distal rod, L ring"/>
    <property type="evidence" value="ECO:0007669"/>
    <property type="project" value="InterPro"/>
</dbReference>
<dbReference type="GO" id="GO:0009279">
    <property type="term" value="C:cell outer membrane"/>
    <property type="evidence" value="ECO:0007669"/>
    <property type="project" value="UniProtKB-SubCell"/>
</dbReference>
<dbReference type="GO" id="GO:0003774">
    <property type="term" value="F:cytoskeletal motor activity"/>
    <property type="evidence" value="ECO:0007669"/>
    <property type="project" value="InterPro"/>
</dbReference>
<dbReference type="GO" id="GO:0071973">
    <property type="term" value="P:bacterial-type flagellum-dependent cell motility"/>
    <property type="evidence" value="ECO:0007669"/>
    <property type="project" value="InterPro"/>
</dbReference>
<dbReference type="HAMAP" id="MF_00415">
    <property type="entry name" value="FlgH"/>
    <property type="match status" value="1"/>
</dbReference>
<dbReference type="InterPro" id="IPR000527">
    <property type="entry name" value="Flag_Lring"/>
</dbReference>
<dbReference type="NCBIfam" id="NF001304">
    <property type="entry name" value="PRK00249.1-4"/>
    <property type="match status" value="1"/>
</dbReference>
<dbReference type="PANTHER" id="PTHR34933">
    <property type="entry name" value="FLAGELLAR L-RING PROTEIN"/>
    <property type="match status" value="1"/>
</dbReference>
<dbReference type="PANTHER" id="PTHR34933:SF1">
    <property type="entry name" value="FLAGELLAR L-RING PROTEIN"/>
    <property type="match status" value="1"/>
</dbReference>
<dbReference type="Pfam" id="PF02107">
    <property type="entry name" value="FlgH"/>
    <property type="match status" value="1"/>
</dbReference>
<dbReference type="PRINTS" id="PR01008">
    <property type="entry name" value="FLGLRINGFLGH"/>
</dbReference>
<dbReference type="PROSITE" id="PS51257">
    <property type="entry name" value="PROKAR_LIPOPROTEIN"/>
    <property type="match status" value="1"/>
</dbReference>
<reference key="1">
    <citation type="submission" date="2008-01" db="EMBL/GenBank/DDBJ databases">
        <title>Complete sequence of Pseudomonas putida GB-1.</title>
        <authorList>
            <consortium name="US DOE Joint Genome Institute"/>
            <person name="Copeland A."/>
            <person name="Lucas S."/>
            <person name="Lapidus A."/>
            <person name="Barry K."/>
            <person name="Glavina del Rio T."/>
            <person name="Dalin E."/>
            <person name="Tice H."/>
            <person name="Pitluck S."/>
            <person name="Bruce D."/>
            <person name="Goodwin L."/>
            <person name="Chertkov O."/>
            <person name="Brettin T."/>
            <person name="Detter J.C."/>
            <person name="Han C."/>
            <person name="Kuske C.R."/>
            <person name="Schmutz J."/>
            <person name="Larimer F."/>
            <person name="Land M."/>
            <person name="Hauser L."/>
            <person name="Kyrpides N."/>
            <person name="Kim E."/>
            <person name="McCarthy J.K."/>
            <person name="Richardson P."/>
        </authorList>
    </citation>
    <scope>NUCLEOTIDE SEQUENCE [LARGE SCALE GENOMIC DNA]</scope>
    <source>
        <strain>GB-1</strain>
    </source>
</reference>
<accession>B0KR09</accession>
<feature type="signal peptide" evidence="1">
    <location>
        <begin position="1"/>
        <end position="18"/>
    </location>
</feature>
<feature type="chain" id="PRO_1000080510" description="Flagellar L-ring protein">
    <location>
        <begin position="19"/>
        <end position="231"/>
    </location>
</feature>
<feature type="lipid moiety-binding region" description="N-palmitoyl cysteine" evidence="1">
    <location>
        <position position="19"/>
    </location>
</feature>
<feature type="lipid moiety-binding region" description="S-diacylglycerol cysteine" evidence="1">
    <location>
        <position position="19"/>
    </location>
</feature>
<protein>
    <recommendedName>
        <fullName evidence="1">Flagellar L-ring protein</fullName>
    </recommendedName>
    <alternativeName>
        <fullName evidence="1">Basal body L-ring protein</fullName>
    </alternativeName>
</protein>
<evidence type="ECO:0000255" key="1">
    <source>
        <dbReference type="HAMAP-Rule" id="MF_00415"/>
    </source>
</evidence>
<organism>
    <name type="scientific">Pseudomonas putida (strain GB-1)</name>
    <dbReference type="NCBI Taxonomy" id="76869"/>
    <lineage>
        <taxon>Bacteria</taxon>
        <taxon>Pseudomonadati</taxon>
        <taxon>Pseudomonadota</taxon>
        <taxon>Gammaproteobacteria</taxon>
        <taxon>Pseudomonadales</taxon>
        <taxon>Pseudomonadaceae</taxon>
        <taxon>Pseudomonas</taxon>
    </lineage>
</organism>
<keyword id="KW-0975">Bacterial flagellum</keyword>
<keyword id="KW-0998">Cell outer membrane</keyword>
<keyword id="KW-0449">Lipoprotein</keyword>
<keyword id="KW-0472">Membrane</keyword>
<keyword id="KW-0564">Palmitate</keyword>
<keyword id="KW-0732">Signal</keyword>
<proteinExistence type="inferred from homology"/>
<sequence length="231" mass="24355">MNRLLSVFALGGAVLLAGCVAPTPKPNDPYYAPVLPRTPLPAAANNGSIYQAGFEQNLYSDRKAFRVGDIITITLNEKTSASKNAGSQIQKNSKADIGLTSLFGSTPNTNNPFGGGDLSLEAGYNGERATKGDSKATQGNTLTGSITVTVAEVLPNGIIAVRGEKWLTLNTGEELVRIAGMVRADDIATDNTVPSTRVADARITYSGTGSFADASQPGWLDRFFISPLWPF</sequence>